<reference key="1">
    <citation type="submission" date="2007-11" db="EMBL/GenBank/DDBJ databases">
        <title>Complete sequence of chromosome of Shewanella baltica OS195.</title>
        <authorList>
            <consortium name="US DOE Joint Genome Institute"/>
            <person name="Copeland A."/>
            <person name="Lucas S."/>
            <person name="Lapidus A."/>
            <person name="Barry K."/>
            <person name="Glavina del Rio T."/>
            <person name="Dalin E."/>
            <person name="Tice H."/>
            <person name="Pitluck S."/>
            <person name="Chain P."/>
            <person name="Malfatti S."/>
            <person name="Shin M."/>
            <person name="Vergez L."/>
            <person name="Schmutz J."/>
            <person name="Larimer F."/>
            <person name="Land M."/>
            <person name="Hauser L."/>
            <person name="Kyrpides N."/>
            <person name="Kim E."/>
            <person name="Brettar I."/>
            <person name="Rodrigues J."/>
            <person name="Konstantinidis K."/>
            <person name="Klappenbach J."/>
            <person name="Hofle M."/>
            <person name="Tiedje J."/>
            <person name="Richardson P."/>
        </authorList>
    </citation>
    <scope>NUCLEOTIDE SEQUENCE [LARGE SCALE GENOMIC DNA]</scope>
    <source>
        <strain>OS195</strain>
    </source>
</reference>
<comment type="similarity">
    <text evidence="1">Belongs to the UPF0235 family.</text>
</comment>
<gene>
    <name type="ordered locus">Sbal195_3186</name>
</gene>
<protein>
    <recommendedName>
        <fullName evidence="1">UPF0235 protein Sbal195_3186</fullName>
    </recommendedName>
</protein>
<evidence type="ECO:0000255" key="1">
    <source>
        <dbReference type="HAMAP-Rule" id="MF_00634"/>
    </source>
</evidence>
<feature type="chain" id="PRO_1000082650" description="UPF0235 protein Sbal195_3186">
    <location>
        <begin position="1"/>
        <end position="99"/>
    </location>
</feature>
<proteinExistence type="inferred from homology"/>
<sequence>MSAVTLQQGDLLLNLYIQPKASRDQIVGLHGDELKVAITAPPIDGKANAHLSKYLAKTFKVPKSDIHIMKGELGRHKQIRVIDPKIIPSIITELMGQTS</sequence>
<name>Y3186_SHEB9</name>
<dbReference type="EMBL" id="CP000891">
    <property type="protein sequence ID" value="ABX50348.1"/>
    <property type="molecule type" value="Genomic_DNA"/>
</dbReference>
<dbReference type="SMR" id="A9KXP6"/>
<dbReference type="KEGG" id="sbn:Sbal195_3186"/>
<dbReference type="HOGENOM" id="CLU_130694_5_0_6"/>
<dbReference type="Proteomes" id="UP000000770">
    <property type="component" value="Chromosome"/>
</dbReference>
<dbReference type="GO" id="GO:0005737">
    <property type="term" value="C:cytoplasm"/>
    <property type="evidence" value="ECO:0007669"/>
    <property type="project" value="TreeGrafter"/>
</dbReference>
<dbReference type="Gene3D" id="3.30.1200.10">
    <property type="entry name" value="YggU-like"/>
    <property type="match status" value="1"/>
</dbReference>
<dbReference type="HAMAP" id="MF_00634">
    <property type="entry name" value="UPF0235"/>
    <property type="match status" value="1"/>
</dbReference>
<dbReference type="InterPro" id="IPR003746">
    <property type="entry name" value="DUF167"/>
</dbReference>
<dbReference type="InterPro" id="IPR036591">
    <property type="entry name" value="YggU-like_sf"/>
</dbReference>
<dbReference type="NCBIfam" id="TIGR00251">
    <property type="entry name" value="DUF167 family protein"/>
    <property type="match status" value="1"/>
</dbReference>
<dbReference type="NCBIfam" id="NF003466">
    <property type="entry name" value="PRK05090.1"/>
    <property type="match status" value="1"/>
</dbReference>
<dbReference type="PANTHER" id="PTHR13420">
    <property type="entry name" value="UPF0235 PROTEIN C15ORF40"/>
    <property type="match status" value="1"/>
</dbReference>
<dbReference type="PANTHER" id="PTHR13420:SF7">
    <property type="entry name" value="UPF0235 PROTEIN C15ORF40"/>
    <property type="match status" value="1"/>
</dbReference>
<dbReference type="Pfam" id="PF02594">
    <property type="entry name" value="DUF167"/>
    <property type="match status" value="1"/>
</dbReference>
<dbReference type="SMART" id="SM01152">
    <property type="entry name" value="DUF167"/>
    <property type="match status" value="1"/>
</dbReference>
<dbReference type="SUPFAM" id="SSF69786">
    <property type="entry name" value="YggU-like"/>
    <property type="match status" value="1"/>
</dbReference>
<accession>A9KXP6</accession>
<organism>
    <name type="scientific">Shewanella baltica (strain OS195)</name>
    <dbReference type="NCBI Taxonomy" id="399599"/>
    <lineage>
        <taxon>Bacteria</taxon>
        <taxon>Pseudomonadati</taxon>
        <taxon>Pseudomonadota</taxon>
        <taxon>Gammaproteobacteria</taxon>
        <taxon>Alteromonadales</taxon>
        <taxon>Shewanellaceae</taxon>
        <taxon>Shewanella</taxon>
    </lineage>
</organism>